<gene>
    <name evidence="1" type="primary">glgA</name>
    <name type="ordered locus">ECUMN_3893</name>
</gene>
<dbReference type="EC" id="2.4.1.21" evidence="1"/>
<dbReference type="EMBL" id="CU928163">
    <property type="protein sequence ID" value="CAR15039.1"/>
    <property type="molecule type" value="Genomic_DNA"/>
</dbReference>
<dbReference type="RefSeq" id="WP_001197646.1">
    <property type="nucleotide sequence ID" value="NC_011751.1"/>
</dbReference>
<dbReference type="RefSeq" id="YP_002414544.1">
    <property type="nucleotide sequence ID" value="NC_011751.1"/>
</dbReference>
<dbReference type="SMR" id="B7NE39"/>
<dbReference type="STRING" id="585056.ECUMN_3893"/>
<dbReference type="CAZy" id="GT5">
    <property type="family name" value="Glycosyltransferase Family 5"/>
</dbReference>
<dbReference type="GeneID" id="75202274"/>
<dbReference type="KEGG" id="eum:ECUMN_3893"/>
<dbReference type="PATRIC" id="fig|585056.7.peg.4067"/>
<dbReference type="HOGENOM" id="CLU_009583_18_2_6"/>
<dbReference type="UniPathway" id="UPA00164"/>
<dbReference type="Proteomes" id="UP000007097">
    <property type="component" value="Chromosome"/>
</dbReference>
<dbReference type="GO" id="GO:0005829">
    <property type="term" value="C:cytosol"/>
    <property type="evidence" value="ECO:0007669"/>
    <property type="project" value="TreeGrafter"/>
</dbReference>
<dbReference type="GO" id="GO:0009011">
    <property type="term" value="F:alpha-1,4-glucan glucosyltransferase (ADP-glucose donor) activity"/>
    <property type="evidence" value="ECO:0007669"/>
    <property type="project" value="UniProtKB-UniRule"/>
</dbReference>
<dbReference type="GO" id="GO:0004373">
    <property type="term" value="F:alpha-1,4-glucan glucosyltransferase (UDP-glucose donor) activity"/>
    <property type="evidence" value="ECO:0007669"/>
    <property type="project" value="InterPro"/>
</dbReference>
<dbReference type="GO" id="GO:0005978">
    <property type="term" value="P:glycogen biosynthetic process"/>
    <property type="evidence" value="ECO:0007669"/>
    <property type="project" value="UniProtKB-UniRule"/>
</dbReference>
<dbReference type="CDD" id="cd03791">
    <property type="entry name" value="GT5_Glycogen_synthase_DULL1-like"/>
    <property type="match status" value="1"/>
</dbReference>
<dbReference type="FunFam" id="3.40.50.2000:FF:000008">
    <property type="entry name" value="Glycogen synthase"/>
    <property type="match status" value="1"/>
</dbReference>
<dbReference type="FunFam" id="3.40.50.2000:FF:000011">
    <property type="entry name" value="Glycogen synthase"/>
    <property type="match status" value="1"/>
</dbReference>
<dbReference type="Gene3D" id="3.40.50.2000">
    <property type="entry name" value="Glycogen Phosphorylase B"/>
    <property type="match status" value="2"/>
</dbReference>
<dbReference type="HAMAP" id="MF_00484">
    <property type="entry name" value="Glycogen_synth"/>
    <property type="match status" value="1"/>
</dbReference>
<dbReference type="InterPro" id="IPR001296">
    <property type="entry name" value="Glyco_trans_1"/>
</dbReference>
<dbReference type="InterPro" id="IPR011835">
    <property type="entry name" value="GS/SS"/>
</dbReference>
<dbReference type="InterPro" id="IPR013534">
    <property type="entry name" value="Starch_synth_cat_dom"/>
</dbReference>
<dbReference type="NCBIfam" id="TIGR02095">
    <property type="entry name" value="glgA"/>
    <property type="match status" value="1"/>
</dbReference>
<dbReference type="NCBIfam" id="NF001899">
    <property type="entry name" value="PRK00654.1-2"/>
    <property type="match status" value="1"/>
</dbReference>
<dbReference type="PANTHER" id="PTHR45825:SF11">
    <property type="entry name" value="ALPHA AMYLASE DOMAIN-CONTAINING PROTEIN"/>
    <property type="match status" value="1"/>
</dbReference>
<dbReference type="PANTHER" id="PTHR45825">
    <property type="entry name" value="GRANULE-BOUND STARCH SYNTHASE 1, CHLOROPLASTIC/AMYLOPLASTIC"/>
    <property type="match status" value="1"/>
</dbReference>
<dbReference type="Pfam" id="PF08323">
    <property type="entry name" value="Glyco_transf_5"/>
    <property type="match status" value="1"/>
</dbReference>
<dbReference type="Pfam" id="PF00534">
    <property type="entry name" value="Glycos_transf_1"/>
    <property type="match status" value="1"/>
</dbReference>
<dbReference type="SUPFAM" id="SSF53756">
    <property type="entry name" value="UDP-Glycosyltransferase/glycogen phosphorylase"/>
    <property type="match status" value="1"/>
</dbReference>
<protein>
    <recommendedName>
        <fullName evidence="1">Glycogen synthase</fullName>
        <ecNumber evidence="1">2.4.1.21</ecNumber>
    </recommendedName>
    <alternativeName>
        <fullName evidence="1">Starch [bacterial glycogen] synthase</fullName>
    </alternativeName>
</protein>
<name>GLGA_ECOLU</name>
<proteinExistence type="inferred from homology"/>
<accession>B7NE39</accession>
<reference key="1">
    <citation type="journal article" date="2009" name="PLoS Genet.">
        <title>Organised genome dynamics in the Escherichia coli species results in highly diverse adaptive paths.</title>
        <authorList>
            <person name="Touchon M."/>
            <person name="Hoede C."/>
            <person name="Tenaillon O."/>
            <person name="Barbe V."/>
            <person name="Baeriswyl S."/>
            <person name="Bidet P."/>
            <person name="Bingen E."/>
            <person name="Bonacorsi S."/>
            <person name="Bouchier C."/>
            <person name="Bouvet O."/>
            <person name="Calteau A."/>
            <person name="Chiapello H."/>
            <person name="Clermont O."/>
            <person name="Cruveiller S."/>
            <person name="Danchin A."/>
            <person name="Diard M."/>
            <person name="Dossat C."/>
            <person name="Karoui M.E."/>
            <person name="Frapy E."/>
            <person name="Garry L."/>
            <person name="Ghigo J.M."/>
            <person name="Gilles A.M."/>
            <person name="Johnson J."/>
            <person name="Le Bouguenec C."/>
            <person name="Lescat M."/>
            <person name="Mangenot S."/>
            <person name="Martinez-Jehanne V."/>
            <person name="Matic I."/>
            <person name="Nassif X."/>
            <person name="Oztas S."/>
            <person name="Petit M.A."/>
            <person name="Pichon C."/>
            <person name="Rouy Z."/>
            <person name="Ruf C.S."/>
            <person name="Schneider D."/>
            <person name="Tourret J."/>
            <person name="Vacherie B."/>
            <person name="Vallenet D."/>
            <person name="Medigue C."/>
            <person name="Rocha E.P.C."/>
            <person name="Denamur E."/>
        </authorList>
    </citation>
    <scope>NUCLEOTIDE SEQUENCE [LARGE SCALE GENOMIC DNA]</scope>
    <source>
        <strain>UMN026 / ExPEC</strain>
    </source>
</reference>
<feature type="chain" id="PRO_1000126070" description="Glycogen synthase">
    <location>
        <begin position="1"/>
        <end position="477"/>
    </location>
</feature>
<feature type="binding site" evidence="1">
    <location>
        <position position="15"/>
    </location>
    <ligand>
        <name>ADP-alpha-D-glucose</name>
        <dbReference type="ChEBI" id="CHEBI:57498"/>
    </ligand>
</feature>
<comment type="function">
    <text evidence="1">Synthesizes alpha-1,4-glucan chains using ADP-glucose.</text>
</comment>
<comment type="catalytic activity">
    <reaction evidence="1">
        <text>[(1-&gt;4)-alpha-D-glucosyl](n) + ADP-alpha-D-glucose = [(1-&gt;4)-alpha-D-glucosyl](n+1) + ADP + H(+)</text>
        <dbReference type="Rhea" id="RHEA:18189"/>
        <dbReference type="Rhea" id="RHEA-COMP:9584"/>
        <dbReference type="Rhea" id="RHEA-COMP:9587"/>
        <dbReference type="ChEBI" id="CHEBI:15378"/>
        <dbReference type="ChEBI" id="CHEBI:15444"/>
        <dbReference type="ChEBI" id="CHEBI:57498"/>
        <dbReference type="ChEBI" id="CHEBI:456216"/>
        <dbReference type="EC" id="2.4.1.21"/>
    </reaction>
</comment>
<comment type="pathway">
    <text evidence="1">Glycan biosynthesis; glycogen biosynthesis.</text>
</comment>
<comment type="similarity">
    <text evidence="1">Belongs to the glycosyltransferase 1 family. Bacterial/plant glycogen synthase subfamily.</text>
</comment>
<organism>
    <name type="scientific">Escherichia coli O17:K52:H18 (strain UMN026 / ExPEC)</name>
    <dbReference type="NCBI Taxonomy" id="585056"/>
    <lineage>
        <taxon>Bacteria</taxon>
        <taxon>Pseudomonadati</taxon>
        <taxon>Pseudomonadota</taxon>
        <taxon>Gammaproteobacteria</taxon>
        <taxon>Enterobacterales</taxon>
        <taxon>Enterobacteriaceae</taxon>
        <taxon>Escherichia</taxon>
    </lineage>
</organism>
<sequence length="477" mass="52822">MQVLHVCSEMFPLLKTGGLADVIGALPAAQIADGVDARVLLPAFPDIRRGVTDAQVVSRRDTFAGHITLLFGHYNGVGIYLIDAPHLYDRPGSPYHDTNLFAYTDNVLRFALLGWVGAEMASGLDPFWRPDVVHAHDWHAGLAPAYLAARGRPAKSVFTVHNLAYQGMFYAHHMNDIQLPWSFFNIHGLEFNGQISFLKAGLYYADHITAVSPTYAREITEPQFAYGMEGLLQQRHREGRLSGVLNGVDEKIWSPETDLLLASRYTRDTLEDKAENKRQLQIAMGLKVDDKVPLFAVVSRLTSQKGLDLVLEALPGLLEQGGQLALLGAGDPVLQEGFLAAAAEYPGQVGVQIGYHEAFSHRIMGGADVILVPSRFEPCGLTQLYGLKYGTLPLVRRTGGLADTVSDCSLENLADGVASGFVFEDSNAWSLLRAIRRAFVLWSRPSLWRFVQRQAMAMDFSWQVAAKSYRELYYRLK</sequence>
<evidence type="ECO:0000255" key="1">
    <source>
        <dbReference type="HAMAP-Rule" id="MF_00484"/>
    </source>
</evidence>
<keyword id="KW-0320">Glycogen biosynthesis</keyword>
<keyword id="KW-0328">Glycosyltransferase</keyword>
<keyword id="KW-0808">Transferase</keyword>